<evidence type="ECO:0000255" key="1">
    <source>
        <dbReference type="PROSITE-ProRule" id="PRU00258"/>
    </source>
</evidence>
<evidence type="ECO:0000269" key="2">
    <source>
    </source>
</evidence>
<evidence type="ECO:0000303" key="3">
    <source>
    </source>
</evidence>
<evidence type="ECO:0000305" key="4"/>
<evidence type="ECO:0000305" key="5">
    <source>
    </source>
</evidence>
<evidence type="ECO:0000305" key="6">
    <source>
    </source>
</evidence>
<evidence type="ECO:0000312" key="7">
    <source>
        <dbReference type="EMBL" id="ACC38725.1"/>
    </source>
</evidence>
<proteinExistence type="inferred from homology"/>
<comment type="function">
    <text evidence="2 6">Acyl-carrier protein (ACP) involved in the biosynthesis of a unique class of isonitrile lipopeptides (INLPs) that seem to play a role in metal acquisition in M.marinum. Is the dedicated ACP for the loading of activated acyl groups catalyzed by MmaC.</text>
</comment>
<comment type="cofactor">
    <cofactor evidence="1">
        <name>pantetheine 4'-phosphate</name>
        <dbReference type="ChEBI" id="CHEBI:47942"/>
    </cofactor>
</comment>
<comment type="pathway">
    <text evidence="4">Lipid metabolism; fatty acid metabolism.</text>
</comment>
<comment type="disruption phenotype">
    <text evidence="2">Deletion of the gene cluster mmaABCDE causes a significant decrease in the intracellular accumulation of zinc in Sauton's medium where metal concentrations are relatively low.</text>
</comment>
<comment type="similarity">
    <text evidence="4">Belongs to the acyl carrier protein (ACP) family.</text>
</comment>
<accession>B2HKM0</accession>
<organism>
    <name type="scientific">Mycobacterium marinum (strain ATCC BAA-535 / M)</name>
    <dbReference type="NCBI Taxonomy" id="216594"/>
    <lineage>
        <taxon>Bacteria</taxon>
        <taxon>Bacillati</taxon>
        <taxon>Actinomycetota</taxon>
        <taxon>Actinomycetes</taxon>
        <taxon>Mycobacteriales</taxon>
        <taxon>Mycobacteriaceae</taxon>
        <taxon>Mycobacterium</taxon>
        <taxon>Mycobacterium ulcerans group</taxon>
    </lineage>
</organism>
<sequence length="83" mass="9304">MADPVRQRILLAVCDVLYIDETDLIDGDATDLRDLGLDSVRFVLLMKRLGVDRESELPSRLAENLSIEGWVSELSQSELESPT</sequence>
<keyword id="KW-0276">Fatty acid metabolism</keyword>
<keyword id="KW-0443">Lipid metabolism</keyword>
<keyword id="KW-0596">Phosphopantetheine</keyword>
<keyword id="KW-0597">Phosphoprotein</keyword>
<keyword id="KW-1185">Reference proteome</keyword>
<dbReference type="EMBL" id="CP000854">
    <property type="protein sequence ID" value="ACC38725.1"/>
    <property type="molecule type" value="Genomic_DNA"/>
</dbReference>
<dbReference type="SMR" id="B2HKM0"/>
<dbReference type="STRING" id="216594.MMAR_0257"/>
<dbReference type="KEGG" id="mmi:MMAR_0257"/>
<dbReference type="eggNOG" id="ENOG5031TJP">
    <property type="taxonomic scope" value="Bacteria"/>
</dbReference>
<dbReference type="HOGENOM" id="CLU_2602322_0_0_11"/>
<dbReference type="UniPathway" id="UPA00199"/>
<dbReference type="Proteomes" id="UP000001190">
    <property type="component" value="Chromosome"/>
</dbReference>
<dbReference type="GO" id="GO:0006631">
    <property type="term" value="P:fatty acid metabolic process"/>
    <property type="evidence" value="ECO:0007669"/>
    <property type="project" value="UniProtKB-UniPathway"/>
</dbReference>
<dbReference type="Gene3D" id="1.10.1200.10">
    <property type="entry name" value="ACP-like"/>
    <property type="match status" value="1"/>
</dbReference>
<dbReference type="InterPro" id="IPR036736">
    <property type="entry name" value="ACP-like_sf"/>
</dbReference>
<dbReference type="InterPro" id="IPR009081">
    <property type="entry name" value="PP-bd_ACP"/>
</dbReference>
<dbReference type="Pfam" id="PF00550">
    <property type="entry name" value="PP-binding"/>
    <property type="match status" value="1"/>
</dbReference>
<dbReference type="SUPFAM" id="SSF47336">
    <property type="entry name" value="ACP-like"/>
    <property type="match status" value="1"/>
</dbReference>
<dbReference type="PROSITE" id="PS50075">
    <property type="entry name" value="CARRIER"/>
    <property type="match status" value="1"/>
</dbReference>
<protein>
    <recommendedName>
        <fullName evidence="5 6">Acyl carrier protein MmaB</fullName>
    </recommendedName>
</protein>
<reference key="1">
    <citation type="journal article" date="2008" name="Genome Res.">
        <title>Insights from the complete genome sequence of Mycobacterium marinum on the evolution of Mycobacterium tuberculosis.</title>
        <authorList>
            <person name="Stinear T.P."/>
            <person name="Seemann T."/>
            <person name="Harrison P.F."/>
            <person name="Jenkin G.A."/>
            <person name="Davies J.K."/>
            <person name="Johnson P.D."/>
            <person name="Abdellah Z."/>
            <person name="Arrowsmith C."/>
            <person name="Chillingworth T."/>
            <person name="Churcher C."/>
            <person name="Clarke K."/>
            <person name="Cronin A."/>
            <person name="Davis P."/>
            <person name="Goodhead I."/>
            <person name="Holroyd N."/>
            <person name="Jagels K."/>
            <person name="Lord A."/>
            <person name="Moule S."/>
            <person name="Mungall K."/>
            <person name="Norbertczak H."/>
            <person name="Quail M.A."/>
            <person name="Rabbinowitsch E."/>
            <person name="Walker D."/>
            <person name="White B."/>
            <person name="Whitehead S."/>
            <person name="Small P.L."/>
            <person name="Brosch R."/>
            <person name="Ramakrishnan L."/>
            <person name="Fischbach M.A."/>
            <person name="Parkhill J."/>
            <person name="Cole S.T."/>
        </authorList>
    </citation>
    <scope>NUCLEOTIDE SEQUENCE [LARGE SCALE GENOMIC DNA]</scope>
    <source>
        <strain>ATCC BAA-535 / M</strain>
    </source>
</reference>
<reference key="2">
    <citation type="journal article" date="2017" name="Proc. Natl. Acad. Sci. U.S.A.">
        <title>Biosynthesis of isonitrile lipopeptides by conserved nonribosomal peptide synthetase gene clusters in Actinobacteria.</title>
        <authorList>
            <person name="Harris N.C."/>
            <person name="Sato M."/>
            <person name="Herman N.A."/>
            <person name="Twigg F."/>
            <person name="Cai W."/>
            <person name="Liu J."/>
            <person name="Zhu X."/>
            <person name="Downey J."/>
            <person name="Khalaf R."/>
            <person name="Martin J."/>
            <person name="Koshino H."/>
            <person name="Zhang W."/>
        </authorList>
    </citation>
    <scope>FUNCTION</scope>
    <scope>DISRUPTION PHENOTYPE</scope>
    <source>
        <strain>ATCC BAA-535 / M</strain>
    </source>
</reference>
<reference key="3">
    <citation type="journal article" date="2018" name="Angew. Chem. Int. Ed. Engl.">
        <title>Isonitrile Formation by a Non-Heme Iron(II)-Dependent Oxidase/Decarboxylase.</title>
        <authorList>
            <person name="Harris N.C."/>
            <person name="Born D.A."/>
            <person name="Cai W."/>
            <person name="Huang Y."/>
            <person name="Martin J."/>
            <person name="Khalaf R."/>
            <person name="Drennan C.L."/>
            <person name="Zhang W."/>
        </authorList>
    </citation>
    <scope>FUNCTION</scope>
</reference>
<feature type="chain" id="PRO_0000458124" description="Acyl carrier protein MmaB">
    <location>
        <begin position="1"/>
        <end position="83"/>
    </location>
</feature>
<feature type="domain" description="Carrier" evidence="1">
    <location>
        <begin position="3"/>
        <end position="83"/>
    </location>
</feature>
<feature type="modified residue" description="O-(pantetheine 4'-phosphoryl)serine" evidence="1">
    <location>
        <position position="39"/>
    </location>
</feature>
<name>INLPB_MYCMM</name>
<gene>
    <name evidence="3" type="primary">mmaB</name>
    <name evidence="7" type="ordered locus">MMAR_0257</name>
</gene>